<sequence length="272" mass="30337">MAAGEISTPQEYIGHHLNNLQLDLRTFELVNPHDAPATFWVLNIDSMFFSVVLGLVFLVLFRQVAKSATSGVPGKLQAAIELVIGFVDNNVRDMYHGKSKVIAPLALTIFVWVFLMNFMDLLPIDLLPYIGEHFLGLPALRVVPSADVNITLSMALGVFVLILFYSIKMKGIGGFSKELTLQPFNHPIFIPINLILEGVSLLSKPVSLGLRLFGNMYAGELIFILIAGLLPWWSQWILSVPWAIFHILIISLQAFIFMVLTIVYLSMASEEH</sequence>
<feature type="chain" id="PRO_0000362297" description="ATP synthase subunit a">
    <location>
        <begin position="1"/>
        <end position="272"/>
    </location>
</feature>
<feature type="transmembrane region" description="Helical" evidence="1">
    <location>
        <begin position="41"/>
        <end position="61"/>
    </location>
</feature>
<feature type="transmembrane region" description="Helical" evidence="1">
    <location>
        <begin position="101"/>
        <end position="121"/>
    </location>
</feature>
<feature type="transmembrane region" description="Helical" evidence="1">
    <location>
        <begin position="147"/>
        <end position="167"/>
    </location>
</feature>
<feature type="transmembrane region" description="Helical" evidence="1">
    <location>
        <begin position="221"/>
        <end position="241"/>
    </location>
</feature>
<feature type="transmembrane region" description="Helical" evidence="1">
    <location>
        <begin position="243"/>
        <end position="263"/>
    </location>
</feature>
<accession>B2VCB0</accession>
<dbReference type="EMBL" id="CU468135">
    <property type="protein sequence ID" value="CAO98527.1"/>
    <property type="molecule type" value="Genomic_DNA"/>
</dbReference>
<dbReference type="RefSeq" id="WP_012443147.1">
    <property type="nucleotide sequence ID" value="NC_010694.1"/>
</dbReference>
<dbReference type="SMR" id="B2VCB0"/>
<dbReference type="STRING" id="465817.ETA_34810"/>
<dbReference type="KEGG" id="eta:ETA_34810"/>
<dbReference type="eggNOG" id="COG0356">
    <property type="taxonomic scope" value="Bacteria"/>
</dbReference>
<dbReference type="HOGENOM" id="CLU_041018_1_0_6"/>
<dbReference type="OrthoDB" id="9789241at2"/>
<dbReference type="Proteomes" id="UP000001726">
    <property type="component" value="Chromosome"/>
</dbReference>
<dbReference type="GO" id="GO:0005886">
    <property type="term" value="C:plasma membrane"/>
    <property type="evidence" value="ECO:0007669"/>
    <property type="project" value="UniProtKB-SubCell"/>
</dbReference>
<dbReference type="GO" id="GO:0045259">
    <property type="term" value="C:proton-transporting ATP synthase complex"/>
    <property type="evidence" value="ECO:0007669"/>
    <property type="project" value="UniProtKB-KW"/>
</dbReference>
<dbReference type="GO" id="GO:0046933">
    <property type="term" value="F:proton-transporting ATP synthase activity, rotational mechanism"/>
    <property type="evidence" value="ECO:0007669"/>
    <property type="project" value="UniProtKB-UniRule"/>
</dbReference>
<dbReference type="GO" id="GO:0042777">
    <property type="term" value="P:proton motive force-driven plasma membrane ATP synthesis"/>
    <property type="evidence" value="ECO:0007669"/>
    <property type="project" value="TreeGrafter"/>
</dbReference>
<dbReference type="CDD" id="cd00310">
    <property type="entry name" value="ATP-synt_Fo_a_6"/>
    <property type="match status" value="1"/>
</dbReference>
<dbReference type="FunFam" id="1.20.120.220:FF:000002">
    <property type="entry name" value="ATP synthase subunit a"/>
    <property type="match status" value="1"/>
</dbReference>
<dbReference type="Gene3D" id="1.20.120.220">
    <property type="entry name" value="ATP synthase, F0 complex, subunit A"/>
    <property type="match status" value="1"/>
</dbReference>
<dbReference type="HAMAP" id="MF_01393">
    <property type="entry name" value="ATP_synth_a_bact"/>
    <property type="match status" value="1"/>
</dbReference>
<dbReference type="InterPro" id="IPR045082">
    <property type="entry name" value="ATP_syn_F0_a_bact/chloroplast"/>
</dbReference>
<dbReference type="InterPro" id="IPR000568">
    <property type="entry name" value="ATP_synth_F0_asu"/>
</dbReference>
<dbReference type="InterPro" id="IPR023011">
    <property type="entry name" value="ATP_synth_F0_asu_AS"/>
</dbReference>
<dbReference type="InterPro" id="IPR035908">
    <property type="entry name" value="F0_ATP_A_sf"/>
</dbReference>
<dbReference type="NCBIfam" id="TIGR01131">
    <property type="entry name" value="ATP_synt_6_or_A"/>
    <property type="match status" value="1"/>
</dbReference>
<dbReference type="NCBIfam" id="NF004477">
    <property type="entry name" value="PRK05815.1-1"/>
    <property type="match status" value="1"/>
</dbReference>
<dbReference type="PANTHER" id="PTHR42823">
    <property type="entry name" value="ATP SYNTHASE SUBUNIT A, CHLOROPLASTIC"/>
    <property type="match status" value="1"/>
</dbReference>
<dbReference type="PANTHER" id="PTHR42823:SF3">
    <property type="entry name" value="ATP SYNTHASE SUBUNIT A, CHLOROPLASTIC"/>
    <property type="match status" value="1"/>
</dbReference>
<dbReference type="Pfam" id="PF00119">
    <property type="entry name" value="ATP-synt_A"/>
    <property type="match status" value="1"/>
</dbReference>
<dbReference type="PRINTS" id="PR00123">
    <property type="entry name" value="ATPASEA"/>
</dbReference>
<dbReference type="SUPFAM" id="SSF81336">
    <property type="entry name" value="F1F0 ATP synthase subunit A"/>
    <property type="match status" value="1"/>
</dbReference>
<dbReference type="PROSITE" id="PS00449">
    <property type="entry name" value="ATPASE_A"/>
    <property type="match status" value="1"/>
</dbReference>
<organism>
    <name type="scientific">Erwinia tasmaniensis (strain DSM 17950 / CFBP 7177 / CIP 109463 / NCPPB 4357 / Et1/99)</name>
    <dbReference type="NCBI Taxonomy" id="465817"/>
    <lineage>
        <taxon>Bacteria</taxon>
        <taxon>Pseudomonadati</taxon>
        <taxon>Pseudomonadota</taxon>
        <taxon>Gammaproteobacteria</taxon>
        <taxon>Enterobacterales</taxon>
        <taxon>Erwiniaceae</taxon>
        <taxon>Erwinia</taxon>
    </lineage>
</organism>
<gene>
    <name evidence="1" type="primary">atpB</name>
    <name type="ordered locus">ETA_34810</name>
</gene>
<evidence type="ECO:0000255" key="1">
    <source>
        <dbReference type="HAMAP-Rule" id="MF_01393"/>
    </source>
</evidence>
<comment type="function">
    <text evidence="1">Key component of the proton channel; it plays a direct role in the translocation of protons across the membrane.</text>
</comment>
<comment type="subunit">
    <text evidence="1">F-type ATPases have 2 components, CF(1) - the catalytic core - and CF(0) - the membrane proton channel. CF(1) has five subunits: alpha(3), beta(3), gamma(1), delta(1), epsilon(1). CF(0) has three main subunits: a(1), b(2) and c(9-12). The alpha and beta chains form an alternating ring which encloses part of the gamma chain. CF(1) is attached to CF(0) by a central stalk formed by the gamma and epsilon chains, while a peripheral stalk is formed by the delta and b chains.</text>
</comment>
<comment type="subcellular location">
    <subcellularLocation>
        <location evidence="1">Cell inner membrane</location>
        <topology evidence="1">Multi-pass membrane protein</topology>
    </subcellularLocation>
</comment>
<comment type="similarity">
    <text evidence="1">Belongs to the ATPase A chain family.</text>
</comment>
<name>ATP6_ERWT9</name>
<reference key="1">
    <citation type="journal article" date="2008" name="Environ. Microbiol.">
        <title>The genome of Erwinia tasmaniensis strain Et1/99, a non-pathogenic bacterium in the genus Erwinia.</title>
        <authorList>
            <person name="Kube M."/>
            <person name="Migdoll A.M."/>
            <person name="Mueller I."/>
            <person name="Kuhl H."/>
            <person name="Beck A."/>
            <person name="Reinhardt R."/>
            <person name="Geider K."/>
        </authorList>
    </citation>
    <scope>NUCLEOTIDE SEQUENCE [LARGE SCALE GENOMIC DNA]</scope>
    <source>
        <strain>DSM 17950 / CFBP 7177 / CIP 109463 / NCPPB 4357 / Et1/99</strain>
    </source>
</reference>
<protein>
    <recommendedName>
        <fullName evidence="1">ATP synthase subunit a</fullName>
    </recommendedName>
    <alternativeName>
        <fullName evidence="1">ATP synthase F0 sector subunit a</fullName>
    </alternativeName>
    <alternativeName>
        <fullName evidence="1">F-ATPase subunit 6</fullName>
    </alternativeName>
</protein>
<proteinExistence type="inferred from homology"/>
<keyword id="KW-0066">ATP synthesis</keyword>
<keyword id="KW-0997">Cell inner membrane</keyword>
<keyword id="KW-1003">Cell membrane</keyword>
<keyword id="KW-0138">CF(0)</keyword>
<keyword id="KW-0375">Hydrogen ion transport</keyword>
<keyword id="KW-0406">Ion transport</keyword>
<keyword id="KW-0472">Membrane</keyword>
<keyword id="KW-1185">Reference proteome</keyword>
<keyword id="KW-0812">Transmembrane</keyword>
<keyword id="KW-1133">Transmembrane helix</keyword>
<keyword id="KW-0813">Transport</keyword>